<feature type="signal peptide" evidence="1">
    <location>
        <begin position="1"/>
        <end position="21"/>
    </location>
</feature>
<feature type="chain" id="PRO_0000356245" description="FAS1 domain-containing protein fsc1">
    <location>
        <begin position="22"/>
        <end position="728"/>
    </location>
</feature>
<feature type="topological domain" description="Vacuolar" evidence="1">
    <location>
        <begin position="22"/>
        <end position="670"/>
    </location>
</feature>
<feature type="transmembrane region" description="Helical" evidence="1">
    <location>
        <begin position="671"/>
        <end position="691"/>
    </location>
</feature>
<feature type="topological domain" description="Cytoplasmic" evidence="1">
    <location>
        <begin position="692"/>
        <end position="728"/>
    </location>
</feature>
<feature type="domain" description="FAS1 1" evidence="2">
    <location>
        <begin position="29"/>
        <end position="151"/>
    </location>
</feature>
<feature type="domain" description="FAS1 2" evidence="2">
    <location>
        <begin position="154"/>
        <end position="285"/>
    </location>
</feature>
<feature type="glycosylation site" description="N-linked (GlcNAc...) asparagine" evidence="1">
    <location>
        <position position="89"/>
    </location>
</feature>
<feature type="glycosylation site" description="N-linked (GlcNAc...) asparagine" evidence="1">
    <location>
        <position position="404"/>
    </location>
</feature>
<feature type="glycosylation site" description="N-linked (GlcNAc...) asparagine" evidence="1">
    <location>
        <position position="501"/>
    </location>
</feature>
<gene>
    <name type="primary">fsc1</name>
    <name type="ORF">SPAC22H12.05c</name>
</gene>
<protein>
    <recommendedName>
        <fullName>FAS1 domain-containing protein fsc1</fullName>
    </recommendedName>
</protein>
<dbReference type="EMBL" id="CU329670">
    <property type="protein sequence ID" value="CAA22557.1"/>
    <property type="molecule type" value="Genomic_DNA"/>
</dbReference>
<dbReference type="PIR" id="T38220">
    <property type="entry name" value="T38220"/>
</dbReference>
<dbReference type="RefSeq" id="NP_593117.1">
    <property type="nucleotide sequence ID" value="NM_001018514.2"/>
</dbReference>
<dbReference type="SMR" id="O94439"/>
<dbReference type="BioGRID" id="278319">
    <property type="interactions" value="22"/>
</dbReference>
<dbReference type="FunCoup" id="O94439">
    <property type="interactions" value="26"/>
</dbReference>
<dbReference type="STRING" id="284812.O94439"/>
<dbReference type="GlyCosmos" id="O94439">
    <property type="glycosylation" value="3 sites, No reported glycans"/>
</dbReference>
<dbReference type="iPTMnet" id="O94439"/>
<dbReference type="PaxDb" id="4896-SPAC22H12.05c.1"/>
<dbReference type="EnsemblFungi" id="SPAC22H12.05c.1">
    <property type="protein sequence ID" value="SPAC22H12.05c.1:pep"/>
    <property type="gene ID" value="SPAC22H12.05c"/>
</dbReference>
<dbReference type="GeneID" id="2541828"/>
<dbReference type="KEGG" id="spo:2541828"/>
<dbReference type="PomBase" id="SPAC22H12.05c">
    <property type="gene designation" value="fsc1"/>
</dbReference>
<dbReference type="VEuPathDB" id="FungiDB:SPAC22H12.05c"/>
<dbReference type="eggNOG" id="KOG1437">
    <property type="taxonomic scope" value="Eukaryota"/>
</dbReference>
<dbReference type="HOGENOM" id="CLU_386923_0_0_1"/>
<dbReference type="InParanoid" id="O94439"/>
<dbReference type="OMA" id="MYQNIDI"/>
<dbReference type="PhylomeDB" id="O94439"/>
<dbReference type="PRO" id="PR:O94439"/>
<dbReference type="Proteomes" id="UP000002485">
    <property type="component" value="Chromosome I"/>
</dbReference>
<dbReference type="GO" id="GO:0005615">
    <property type="term" value="C:extracellular space"/>
    <property type="evidence" value="ECO:0000318"/>
    <property type="project" value="GO_Central"/>
</dbReference>
<dbReference type="GO" id="GO:0000329">
    <property type="term" value="C:fungal-type vacuole membrane"/>
    <property type="evidence" value="ECO:0000314"/>
    <property type="project" value="PomBase"/>
</dbReference>
<dbReference type="GO" id="GO:0016236">
    <property type="term" value="P:macroautophagy"/>
    <property type="evidence" value="ECO:0000315"/>
    <property type="project" value="PomBase"/>
</dbReference>
<dbReference type="GO" id="GO:0015031">
    <property type="term" value="P:protein transport"/>
    <property type="evidence" value="ECO:0007669"/>
    <property type="project" value="UniProtKB-KW"/>
</dbReference>
<dbReference type="Gene3D" id="2.30.180.10">
    <property type="entry name" value="FAS1 domain"/>
    <property type="match status" value="3"/>
</dbReference>
<dbReference type="InterPro" id="IPR050904">
    <property type="entry name" value="Adhesion/Biosynth-related"/>
</dbReference>
<dbReference type="InterPro" id="IPR036378">
    <property type="entry name" value="FAS1_dom_sf"/>
</dbReference>
<dbReference type="InterPro" id="IPR000782">
    <property type="entry name" value="FAS1_domain"/>
</dbReference>
<dbReference type="PANTHER" id="PTHR10900:SF125">
    <property type="entry name" value="FAS1 DOMAIN-CONTAINING PROTEIN YLR001C"/>
    <property type="match status" value="1"/>
</dbReference>
<dbReference type="PANTHER" id="PTHR10900">
    <property type="entry name" value="PERIOSTIN-RELATED"/>
    <property type="match status" value="1"/>
</dbReference>
<dbReference type="Pfam" id="PF02469">
    <property type="entry name" value="Fasciclin"/>
    <property type="match status" value="2"/>
</dbReference>
<dbReference type="SMART" id="SM00554">
    <property type="entry name" value="FAS1"/>
    <property type="match status" value="3"/>
</dbReference>
<dbReference type="SUPFAM" id="SSF82153">
    <property type="entry name" value="FAS1 domain"/>
    <property type="match status" value="3"/>
</dbReference>
<dbReference type="PROSITE" id="PS50213">
    <property type="entry name" value="FAS1"/>
    <property type="match status" value="2"/>
</dbReference>
<organism>
    <name type="scientific">Schizosaccharomyces pombe (strain 972 / ATCC 24843)</name>
    <name type="common">Fission yeast</name>
    <dbReference type="NCBI Taxonomy" id="284812"/>
    <lineage>
        <taxon>Eukaryota</taxon>
        <taxon>Fungi</taxon>
        <taxon>Dikarya</taxon>
        <taxon>Ascomycota</taxon>
        <taxon>Taphrinomycotina</taxon>
        <taxon>Schizosaccharomycetes</taxon>
        <taxon>Schizosaccharomycetales</taxon>
        <taxon>Schizosaccharomycetaceae</taxon>
        <taxon>Schizosaccharomyces</taxon>
    </lineage>
</organism>
<evidence type="ECO:0000255" key="1"/>
<evidence type="ECO:0000255" key="2">
    <source>
        <dbReference type="PROSITE-ProRule" id="PRU00082"/>
    </source>
</evidence>
<evidence type="ECO:0000269" key="3">
    <source>
    </source>
</evidence>
<evidence type="ECO:0000269" key="4">
    <source>
    </source>
</evidence>
<reference key="1">
    <citation type="journal article" date="2002" name="Nature">
        <title>The genome sequence of Schizosaccharomyces pombe.</title>
        <authorList>
            <person name="Wood V."/>
            <person name="Gwilliam R."/>
            <person name="Rajandream M.A."/>
            <person name="Lyne M.H."/>
            <person name="Lyne R."/>
            <person name="Stewart A."/>
            <person name="Sgouros J.G."/>
            <person name="Peat N."/>
            <person name="Hayles J."/>
            <person name="Baker S.G."/>
            <person name="Basham D."/>
            <person name="Bowman S."/>
            <person name="Brooks K."/>
            <person name="Brown D."/>
            <person name="Brown S."/>
            <person name="Chillingworth T."/>
            <person name="Churcher C.M."/>
            <person name="Collins M."/>
            <person name="Connor R."/>
            <person name="Cronin A."/>
            <person name="Davis P."/>
            <person name="Feltwell T."/>
            <person name="Fraser A."/>
            <person name="Gentles S."/>
            <person name="Goble A."/>
            <person name="Hamlin N."/>
            <person name="Harris D.E."/>
            <person name="Hidalgo J."/>
            <person name="Hodgson G."/>
            <person name="Holroyd S."/>
            <person name="Hornsby T."/>
            <person name="Howarth S."/>
            <person name="Huckle E.J."/>
            <person name="Hunt S."/>
            <person name="Jagels K."/>
            <person name="James K.D."/>
            <person name="Jones L."/>
            <person name="Jones M."/>
            <person name="Leather S."/>
            <person name="McDonald S."/>
            <person name="McLean J."/>
            <person name="Mooney P."/>
            <person name="Moule S."/>
            <person name="Mungall K.L."/>
            <person name="Murphy L.D."/>
            <person name="Niblett D."/>
            <person name="Odell C."/>
            <person name="Oliver K."/>
            <person name="O'Neil S."/>
            <person name="Pearson D."/>
            <person name="Quail M.A."/>
            <person name="Rabbinowitsch E."/>
            <person name="Rutherford K.M."/>
            <person name="Rutter S."/>
            <person name="Saunders D."/>
            <person name="Seeger K."/>
            <person name="Sharp S."/>
            <person name="Skelton J."/>
            <person name="Simmonds M.N."/>
            <person name="Squares R."/>
            <person name="Squares S."/>
            <person name="Stevens K."/>
            <person name="Taylor K."/>
            <person name="Taylor R.G."/>
            <person name="Tivey A."/>
            <person name="Walsh S.V."/>
            <person name="Warren T."/>
            <person name="Whitehead S."/>
            <person name="Woodward J.R."/>
            <person name="Volckaert G."/>
            <person name="Aert R."/>
            <person name="Robben J."/>
            <person name="Grymonprez B."/>
            <person name="Weltjens I."/>
            <person name="Vanstreels E."/>
            <person name="Rieger M."/>
            <person name="Schaefer M."/>
            <person name="Mueller-Auer S."/>
            <person name="Gabel C."/>
            <person name="Fuchs M."/>
            <person name="Duesterhoeft A."/>
            <person name="Fritzc C."/>
            <person name="Holzer E."/>
            <person name="Moestl D."/>
            <person name="Hilbert H."/>
            <person name="Borzym K."/>
            <person name="Langer I."/>
            <person name="Beck A."/>
            <person name="Lehrach H."/>
            <person name="Reinhardt R."/>
            <person name="Pohl T.M."/>
            <person name="Eger P."/>
            <person name="Zimmermann W."/>
            <person name="Wedler H."/>
            <person name="Wambutt R."/>
            <person name="Purnelle B."/>
            <person name="Goffeau A."/>
            <person name="Cadieu E."/>
            <person name="Dreano S."/>
            <person name="Gloux S."/>
            <person name="Lelaure V."/>
            <person name="Mottier S."/>
            <person name="Galibert F."/>
            <person name="Aves S.J."/>
            <person name="Xiang Z."/>
            <person name="Hunt C."/>
            <person name="Moore K."/>
            <person name="Hurst S.M."/>
            <person name="Lucas M."/>
            <person name="Rochet M."/>
            <person name="Gaillardin C."/>
            <person name="Tallada V.A."/>
            <person name="Garzon A."/>
            <person name="Thode G."/>
            <person name="Daga R.R."/>
            <person name="Cruzado L."/>
            <person name="Jimenez J."/>
            <person name="Sanchez M."/>
            <person name="del Rey F."/>
            <person name="Benito J."/>
            <person name="Dominguez A."/>
            <person name="Revuelta J.L."/>
            <person name="Moreno S."/>
            <person name="Armstrong J."/>
            <person name="Forsburg S.L."/>
            <person name="Cerutti L."/>
            <person name="Lowe T."/>
            <person name="McCombie W.R."/>
            <person name="Paulsen I."/>
            <person name="Potashkin J."/>
            <person name="Shpakovski G.V."/>
            <person name="Ussery D."/>
            <person name="Barrell B.G."/>
            <person name="Nurse P."/>
        </authorList>
    </citation>
    <scope>NUCLEOTIDE SEQUENCE [LARGE SCALE GENOMIC DNA]</scope>
    <source>
        <strain>972 / ATCC 24843</strain>
    </source>
</reference>
<reference key="2">
    <citation type="journal article" date="2006" name="Nat. Biotechnol.">
        <title>ORFeome cloning and global analysis of protein localization in the fission yeast Schizosaccharomyces pombe.</title>
        <authorList>
            <person name="Matsuyama A."/>
            <person name="Arai R."/>
            <person name="Yashiroda Y."/>
            <person name="Shirai A."/>
            <person name="Kamata A."/>
            <person name="Sekido S."/>
            <person name="Kobayashi Y."/>
            <person name="Hashimoto A."/>
            <person name="Hamamoto M."/>
            <person name="Hiraoka Y."/>
            <person name="Horinouchi S."/>
            <person name="Yoshida M."/>
        </authorList>
    </citation>
    <scope>SUBCELLULAR LOCATION [LARGE SCALE ANALYSIS]</scope>
</reference>
<reference key="3">
    <citation type="journal article" date="2013" name="PLoS Genet.">
        <title>Global analysis of fission yeast mating genes reveals new autophagy factors.</title>
        <authorList>
            <person name="Sun L.L."/>
            <person name="Li M."/>
            <person name="Suo F."/>
            <person name="Liu X.M."/>
            <person name="Shen E.Z."/>
            <person name="Yang B."/>
            <person name="Dong M.Q."/>
            <person name="He W.Z."/>
            <person name="Du L.L."/>
        </authorList>
    </citation>
    <scope>DISRUPTION PHENOTYPE</scope>
    <scope>SUBCELLULAR LOCATION</scope>
    <scope>FUNCTION</scope>
</reference>
<sequence>MNLQFRLYLLFILLFISFANGKNEYEDKSTSIIDLLSSKSQFSKLIRRLQRNRLVPYLNRNKGLTLFAPLNEAFPDDSIEPNLLYYIVNTTELDRSVLRTQLKSSDGQQIALKIHYKAETGRAYDKVNNAQIVQSNWRADSGVVQVIDNIIDLPPPALEILSSEKDFSIFHRLSVAWVGEYSSVTMLVPDSSAFLNVYTNTELAYLYSMYAAEDVKTLIHQHILVNQRVYAEDVIEPKTFHYKNGISISMKFDKDQKKLFINDVSTTKYDLLTFSGAIHTVSSLINPEIISFTPAKYLIGIGAAWFSEKLSRERKSISVDKTSKRAILAPTNWAYREIIDIDYHIIENFDLPAPNKYALYVTNIKSGNSVGEDTNALVRIATGSAGEMYVNVETRSIQSENIGNVSLYVLDKDIEPPQPLLSQLILVDEISFSVRYLASLGLGDYTKVTWFLVKNSAWTQLGLVHLVLQQNLELLESVMLDYAFEGIAFYGSSDEAWASGNYTTLSNKEFLIEGVYEDSNSRNKRDLLRINNEIYEVQTRDLLVKDGVVHLVDKVKLPFSVSQKDMIIAGGRKEFLELLDKFEMLDMLDSGYPVVVPSLTGSDVNTKDSSFAERHIIDPEKRNFVISGSRLSVDSSPWISIQDYGYSELGNVYFVQNAIPTKRQNRWRITFISISGLLLSVGICVLCYKIYFKFFRNRFMNQGEREPLLAPADSDTMAGRRNSSSLSV</sequence>
<proteinExistence type="inferred from homology"/>
<comment type="function">
    <text evidence="4">Required for the fusion of autophagosomes with the vacuole.</text>
</comment>
<comment type="subcellular location">
    <subcellularLocation>
        <location evidence="3 4">Vacuole membrane</location>
        <topology evidence="3 4">Single-pass type I membrane protein</topology>
    </subcellularLocation>
</comment>
<comment type="disruption phenotype">
    <text evidence="4">Impairs atg8-processing.</text>
</comment>
<accession>O94439</accession>
<keyword id="KW-0072">Autophagy</keyword>
<keyword id="KW-0325">Glycoprotein</keyword>
<keyword id="KW-0472">Membrane</keyword>
<keyword id="KW-0653">Protein transport</keyword>
<keyword id="KW-1185">Reference proteome</keyword>
<keyword id="KW-0677">Repeat</keyword>
<keyword id="KW-0732">Signal</keyword>
<keyword id="KW-0812">Transmembrane</keyword>
<keyword id="KW-1133">Transmembrane helix</keyword>
<keyword id="KW-0813">Transport</keyword>
<keyword id="KW-0926">Vacuole</keyword>
<name>FSC1_SCHPO</name>